<dbReference type="EC" id="4.2.1.20" evidence="1"/>
<dbReference type="EMBL" id="CP001029">
    <property type="protein sequence ID" value="ACB78389.1"/>
    <property type="molecule type" value="Genomic_DNA"/>
</dbReference>
<dbReference type="RefSeq" id="WP_012452153.1">
    <property type="nucleotide sequence ID" value="NC_010725.1"/>
</dbReference>
<dbReference type="SMR" id="B1ZG57"/>
<dbReference type="STRING" id="441620.Mpop_0201"/>
<dbReference type="KEGG" id="mpo:Mpop_0201"/>
<dbReference type="eggNOG" id="COG0133">
    <property type="taxonomic scope" value="Bacteria"/>
</dbReference>
<dbReference type="HOGENOM" id="CLU_016734_3_1_5"/>
<dbReference type="OrthoDB" id="9766131at2"/>
<dbReference type="UniPathway" id="UPA00035">
    <property type="reaction ID" value="UER00044"/>
</dbReference>
<dbReference type="Proteomes" id="UP000007136">
    <property type="component" value="Chromosome"/>
</dbReference>
<dbReference type="GO" id="GO:0005737">
    <property type="term" value="C:cytoplasm"/>
    <property type="evidence" value="ECO:0007669"/>
    <property type="project" value="TreeGrafter"/>
</dbReference>
<dbReference type="GO" id="GO:0004834">
    <property type="term" value="F:tryptophan synthase activity"/>
    <property type="evidence" value="ECO:0007669"/>
    <property type="project" value="UniProtKB-UniRule"/>
</dbReference>
<dbReference type="CDD" id="cd06446">
    <property type="entry name" value="Trp-synth_B"/>
    <property type="match status" value="1"/>
</dbReference>
<dbReference type="FunFam" id="3.40.50.1100:FF:000001">
    <property type="entry name" value="Tryptophan synthase beta chain"/>
    <property type="match status" value="1"/>
</dbReference>
<dbReference type="FunFam" id="3.40.50.1100:FF:000004">
    <property type="entry name" value="Tryptophan synthase beta chain"/>
    <property type="match status" value="1"/>
</dbReference>
<dbReference type="Gene3D" id="3.40.50.1100">
    <property type="match status" value="2"/>
</dbReference>
<dbReference type="HAMAP" id="MF_00133">
    <property type="entry name" value="Trp_synth_beta"/>
    <property type="match status" value="1"/>
</dbReference>
<dbReference type="InterPro" id="IPR006653">
    <property type="entry name" value="Trp_synth_b_CS"/>
</dbReference>
<dbReference type="InterPro" id="IPR006654">
    <property type="entry name" value="Trp_synth_beta"/>
</dbReference>
<dbReference type="InterPro" id="IPR023026">
    <property type="entry name" value="Trp_synth_beta/beta-like"/>
</dbReference>
<dbReference type="InterPro" id="IPR001926">
    <property type="entry name" value="TrpB-like_PALP"/>
</dbReference>
<dbReference type="InterPro" id="IPR036052">
    <property type="entry name" value="TrpB-like_PALP_sf"/>
</dbReference>
<dbReference type="NCBIfam" id="TIGR00263">
    <property type="entry name" value="trpB"/>
    <property type="match status" value="1"/>
</dbReference>
<dbReference type="PANTHER" id="PTHR48077:SF3">
    <property type="entry name" value="TRYPTOPHAN SYNTHASE"/>
    <property type="match status" value="1"/>
</dbReference>
<dbReference type="PANTHER" id="PTHR48077">
    <property type="entry name" value="TRYPTOPHAN SYNTHASE-RELATED"/>
    <property type="match status" value="1"/>
</dbReference>
<dbReference type="Pfam" id="PF00291">
    <property type="entry name" value="PALP"/>
    <property type="match status" value="1"/>
</dbReference>
<dbReference type="PIRSF" id="PIRSF001413">
    <property type="entry name" value="Trp_syn_beta"/>
    <property type="match status" value="1"/>
</dbReference>
<dbReference type="SUPFAM" id="SSF53686">
    <property type="entry name" value="Tryptophan synthase beta subunit-like PLP-dependent enzymes"/>
    <property type="match status" value="1"/>
</dbReference>
<dbReference type="PROSITE" id="PS00168">
    <property type="entry name" value="TRP_SYNTHASE_BETA"/>
    <property type="match status" value="1"/>
</dbReference>
<proteinExistence type="inferred from homology"/>
<organism>
    <name type="scientific">Methylorubrum populi (strain ATCC BAA-705 / NCIMB 13946 / BJ001)</name>
    <name type="common">Methylobacterium populi</name>
    <dbReference type="NCBI Taxonomy" id="441620"/>
    <lineage>
        <taxon>Bacteria</taxon>
        <taxon>Pseudomonadati</taxon>
        <taxon>Pseudomonadota</taxon>
        <taxon>Alphaproteobacteria</taxon>
        <taxon>Hyphomicrobiales</taxon>
        <taxon>Methylobacteriaceae</taxon>
        <taxon>Methylorubrum</taxon>
    </lineage>
</organism>
<feature type="chain" id="PRO_1000198749" description="Tryptophan synthase beta chain">
    <location>
        <begin position="1"/>
        <end position="413"/>
    </location>
</feature>
<feature type="modified residue" description="N6-(pyridoxal phosphate)lysine" evidence="1">
    <location>
        <position position="106"/>
    </location>
</feature>
<evidence type="ECO:0000255" key="1">
    <source>
        <dbReference type="HAMAP-Rule" id="MF_00133"/>
    </source>
</evidence>
<gene>
    <name evidence="1" type="primary">trpB</name>
    <name type="ordered locus">Mpop_0201</name>
</gene>
<sequence length="413" mass="44651">MTLNPAPNSFRTGPDERGRFGIFGGRFVAETLMPLILDLEKAYAEAKADPSFKADMESYGTHYIGRPSPLYYAERLTEHLRASAPAGQGAKIYFKREELNHTGSHKVNNVLGQILLARRMGKPRIIAETGAGQHGVATATLCARFGLKCVVYMGAVDVERQAPNVFRMKMLGAEVVPVQSGTRTLKDAMNEALRDWVTNVADTFYCIGTVAGPHPYPAMVRDFQSVIGIETKQQMLALEGRLPDSLVACIGGGSNAMGLFHPFLDDREVEIYGVEAAGHGVQSGLHAASLTGGRPGVLHGNRTYLLMNEDGQIADAHSISAGLDYPGIGPEHAWLHEMGRVTYLSATDTETLEAFKLCSMLEGIIPALEPAHALSKVLELAPTKPAEHLMVMNLSGRGDKDIPQVAQIFGQTL</sequence>
<comment type="function">
    <text evidence="1">The beta subunit is responsible for the synthesis of L-tryptophan from indole and L-serine.</text>
</comment>
<comment type="catalytic activity">
    <reaction evidence="1">
        <text>(1S,2R)-1-C-(indol-3-yl)glycerol 3-phosphate + L-serine = D-glyceraldehyde 3-phosphate + L-tryptophan + H2O</text>
        <dbReference type="Rhea" id="RHEA:10532"/>
        <dbReference type="ChEBI" id="CHEBI:15377"/>
        <dbReference type="ChEBI" id="CHEBI:33384"/>
        <dbReference type="ChEBI" id="CHEBI:57912"/>
        <dbReference type="ChEBI" id="CHEBI:58866"/>
        <dbReference type="ChEBI" id="CHEBI:59776"/>
        <dbReference type="EC" id="4.2.1.20"/>
    </reaction>
</comment>
<comment type="cofactor">
    <cofactor evidence="1">
        <name>pyridoxal 5'-phosphate</name>
        <dbReference type="ChEBI" id="CHEBI:597326"/>
    </cofactor>
</comment>
<comment type="pathway">
    <text evidence="1">Amino-acid biosynthesis; L-tryptophan biosynthesis; L-tryptophan from chorismate: step 5/5.</text>
</comment>
<comment type="subunit">
    <text evidence="1">Tetramer of two alpha and two beta chains.</text>
</comment>
<comment type="similarity">
    <text evidence="1">Belongs to the TrpB family.</text>
</comment>
<reference key="1">
    <citation type="submission" date="2008-04" db="EMBL/GenBank/DDBJ databases">
        <title>Complete sequence of chromosome of Methylobacterium populi BJ001.</title>
        <authorList>
            <consortium name="US DOE Joint Genome Institute"/>
            <person name="Copeland A."/>
            <person name="Lucas S."/>
            <person name="Lapidus A."/>
            <person name="Glavina del Rio T."/>
            <person name="Dalin E."/>
            <person name="Tice H."/>
            <person name="Bruce D."/>
            <person name="Goodwin L."/>
            <person name="Pitluck S."/>
            <person name="Chertkov O."/>
            <person name="Brettin T."/>
            <person name="Detter J.C."/>
            <person name="Han C."/>
            <person name="Kuske C.R."/>
            <person name="Schmutz J."/>
            <person name="Larimer F."/>
            <person name="Land M."/>
            <person name="Hauser L."/>
            <person name="Kyrpides N."/>
            <person name="Mikhailova N."/>
            <person name="Marx C."/>
            <person name="Richardson P."/>
        </authorList>
    </citation>
    <scope>NUCLEOTIDE SEQUENCE [LARGE SCALE GENOMIC DNA]</scope>
    <source>
        <strain>ATCC BAA-705 / NCIMB 13946 / BJ001</strain>
    </source>
</reference>
<accession>B1ZG57</accession>
<keyword id="KW-0028">Amino-acid biosynthesis</keyword>
<keyword id="KW-0057">Aromatic amino acid biosynthesis</keyword>
<keyword id="KW-0456">Lyase</keyword>
<keyword id="KW-0663">Pyridoxal phosphate</keyword>
<keyword id="KW-0822">Tryptophan biosynthesis</keyword>
<protein>
    <recommendedName>
        <fullName evidence="1">Tryptophan synthase beta chain</fullName>
        <ecNumber evidence="1">4.2.1.20</ecNumber>
    </recommendedName>
</protein>
<name>TRPB_METPB</name>